<gene>
    <name evidence="10" type="primary">AacuE</name>
    <name type="ORF">ASPACDRAFT_33648</name>
</gene>
<accession>A0A1L9WLE2</accession>
<protein>
    <recommendedName>
        <fullName evidence="10">Cytochrome P450 monooxygenase AacuE</fullName>
        <ecNumber evidence="12">1.14.13.-</ecNumber>
    </recommendedName>
    <alternativeName>
        <fullName evidence="10">Secalonic acid biosynthesis cluster protein E</fullName>
    </alternativeName>
</protein>
<proteinExistence type="evidence at protein level"/>
<evidence type="ECO:0000250" key="1">
    <source>
        <dbReference type="UniProtKB" id="P04798"/>
    </source>
</evidence>
<evidence type="ECO:0000255" key="2"/>
<evidence type="ECO:0000255" key="3">
    <source>
        <dbReference type="PROSITE-ProRule" id="PRU00498"/>
    </source>
</evidence>
<evidence type="ECO:0000269" key="4">
    <source>
    </source>
</evidence>
<evidence type="ECO:0000269" key="5">
    <source>
    </source>
</evidence>
<evidence type="ECO:0000269" key="6">
    <source>
    </source>
</evidence>
<evidence type="ECO:0000269" key="7">
    <source>
    </source>
</evidence>
<evidence type="ECO:0000269" key="8">
    <source>
    </source>
</evidence>
<evidence type="ECO:0000269" key="9">
    <source>
    </source>
</evidence>
<evidence type="ECO:0000303" key="10">
    <source>
    </source>
</evidence>
<evidence type="ECO:0000305" key="11"/>
<evidence type="ECO:0000305" key="12">
    <source>
    </source>
</evidence>
<evidence type="ECO:0000305" key="13">
    <source>
    </source>
</evidence>
<reference key="1">
    <citation type="journal article" date="2017" name="Genome Biol.">
        <title>Comparative genomics reveals high biological diversity and specific adaptations in the industrially and medically important fungal genus Aspergillus.</title>
        <authorList>
            <person name="de Vries R.P."/>
            <person name="Riley R."/>
            <person name="Wiebenga A."/>
            <person name="Aguilar-Osorio G."/>
            <person name="Amillis S."/>
            <person name="Uchima C.A."/>
            <person name="Anderluh G."/>
            <person name="Asadollahi M."/>
            <person name="Askin M."/>
            <person name="Barry K."/>
            <person name="Battaglia E."/>
            <person name="Bayram O."/>
            <person name="Benocci T."/>
            <person name="Braus-Stromeyer S.A."/>
            <person name="Caldana C."/>
            <person name="Canovas D."/>
            <person name="Cerqueira G.C."/>
            <person name="Chen F."/>
            <person name="Chen W."/>
            <person name="Choi C."/>
            <person name="Clum A."/>
            <person name="Dos Santos R.A."/>
            <person name="Damasio A.R."/>
            <person name="Diallinas G."/>
            <person name="Emri T."/>
            <person name="Fekete E."/>
            <person name="Flipphi M."/>
            <person name="Freyberg S."/>
            <person name="Gallo A."/>
            <person name="Gournas C."/>
            <person name="Habgood R."/>
            <person name="Hainaut M."/>
            <person name="Harispe M.L."/>
            <person name="Henrissat B."/>
            <person name="Hilden K.S."/>
            <person name="Hope R."/>
            <person name="Hossain A."/>
            <person name="Karabika E."/>
            <person name="Karaffa L."/>
            <person name="Karanyi Z."/>
            <person name="Krasevec N."/>
            <person name="Kuo A."/>
            <person name="Kusch H."/>
            <person name="LaButti K."/>
            <person name="Lagendijk E.L."/>
            <person name="Lapidus A."/>
            <person name="Levasseur A."/>
            <person name="Lindquist E."/>
            <person name="Lipzen A."/>
            <person name="Logrieco A.F."/>
            <person name="MacCabe A."/>
            <person name="Maekelae M.R."/>
            <person name="Malavazi I."/>
            <person name="Melin P."/>
            <person name="Meyer V."/>
            <person name="Mielnichuk N."/>
            <person name="Miskei M."/>
            <person name="Molnar A.P."/>
            <person name="Mule G."/>
            <person name="Ngan C.Y."/>
            <person name="Orejas M."/>
            <person name="Orosz E."/>
            <person name="Ouedraogo J.P."/>
            <person name="Overkamp K.M."/>
            <person name="Park H.-S."/>
            <person name="Perrone G."/>
            <person name="Piumi F."/>
            <person name="Punt P.J."/>
            <person name="Ram A.F."/>
            <person name="Ramon A."/>
            <person name="Rauscher S."/>
            <person name="Record E."/>
            <person name="Riano-Pachon D.M."/>
            <person name="Robert V."/>
            <person name="Roehrig J."/>
            <person name="Ruller R."/>
            <person name="Salamov A."/>
            <person name="Salih N.S."/>
            <person name="Samson R.A."/>
            <person name="Sandor E."/>
            <person name="Sanguinetti M."/>
            <person name="Schuetze T."/>
            <person name="Sepcic K."/>
            <person name="Shelest E."/>
            <person name="Sherlock G."/>
            <person name="Sophianopoulou V."/>
            <person name="Squina F.M."/>
            <person name="Sun H."/>
            <person name="Susca A."/>
            <person name="Todd R.B."/>
            <person name="Tsang A."/>
            <person name="Unkles S.E."/>
            <person name="van de Wiele N."/>
            <person name="van Rossen-Uffink D."/>
            <person name="Oliveira J.V."/>
            <person name="Vesth T.C."/>
            <person name="Visser J."/>
            <person name="Yu J.-H."/>
            <person name="Zhou M."/>
            <person name="Andersen M.R."/>
            <person name="Archer D.B."/>
            <person name="Baker S.E."/>
            <person name="Benoit I."/>
            <person name="Brakhage A.A."/>
            <person name="Braus G.H."/>
            <person name="Fischer R."/>
            <person name="Frisvad J.C."/>
            <person name="Goldman G.H."/>
            <person name="Houbraken J."/>
            <person name="Oakley B."/>
            <person name="Pocsi I."/>
            <person name="Scazzocchio C."/>
            <person name="Seiboth B."/>
            <person name="vanKuyk P.A."/>
            <person name="Wortman J."/>
            <person name="Dyer P.S."/>
            <person name="Grigoriev I.V."/>
        </authorList>
    </citation>
    <scope>NUCLEOTIDE SEQUENCE [LARGE SCALE GENOMIC DNA]</scope>
    <source>
        <strain>ATCC 16872 / CBS 172.66 / WB 5094</strain>
    </source>
</reference>
<reference key="2">
    <citation type="journal article" date="2017" name="Neoplasma">
        <title>Secalonic acid- F inhibited cell growth more effectively than 5-fluorouracil on hepatocellular carcinoma in vitro and in vivo.</title>
        <authorList>
            <person name="Gao X."/>
            <person name="Sun H.L."/>
            <person name="Liu D.S."/>
            <person name="Zhang J.R."/>
            <person name="Zhang J."/>
            <person name="Yan M.M."/>
            <person name="Pan X.H."/>
        </authorList>
    </citation>
    <scope>BIOTECHNOLOGY</scope>
</reference>
<reference key="3">
    <citation type="journal article" date="2018" name="Curr. Microbiol.">
        <title>Secondary Metabolites and Their Biological Activity from Aspergillus aculeatus KKU-CT2.</title>
        <authorList>
            <person name="Yodsing N."/>
            <person name="Lekphrom R."/>
            <person name="Sangsopha W."/>
            <person name="Aimi T."/>
            <person name="Boonlue S."/>
        </authorList>
    </citation>
    <scope>BIOTECHNOLOGY</scope>
</reference>
<reference key="4">
    <citation type="journal article" date="2019" name="Chem. Sci.">
        <title>Structure revision of cryptosporioptides and determination of the genetic basis for dimeric xanthone biosynthesis in fungi.</title>
        <authorList>
            <person name="Greco C."/>
            <person name="de Mattos-Shipley K."/>
            <person name="Bailey A.M."/>
            <person name="Mulholland N.P."/>
            <person name="Vincent J.L."/>
            <person name="Willis C.L."/>
            <person name="Cox R.J."/>
            <person name="Simpson T.J."/>
        </authorList>
    </citation>
    <scope>IDENTIFICATION</scope>
    <scope>FUNCTION</scope>
</reference>
<reference key="5">
    <citation type="journal article" date="2019" name="Molecules">
        <title>Secalonic Acid-F, a Novel Mycotoxin, Represses the Progression of Hepatocellular Carcinoma via MARCH1 Regulation of the PI3K/AKT/beta-catenin Signaling Pathway.</title>
        <authorList>
            <person name="Xie L."/>
            <person name="Li M."/>
            <person name="Liu D."/>
            <person name="Wang X."/>
            <person name="Wang P."/>
            <person name="Dai H."/>
            <person name="Yang W."/>
            <person name="Liu W."/>
            <person name="Hu X."/>
            <person name="Zhao M."/>
        </authorList>
    </citation>
    <scope>BIOTECHNOLOGY</scope>
</reference>
<reference key="6">
    <citation type="journal article" date="2020" name="ACS Omega">
        <title>Discovery of a Secalonic Acid Derivative from Aspergillus aculeatus, an Endophyte of Rosa damascena Mill., Triggers Apoptosis in MDA-MB-231 Triple Negative Breast Cancer Cells.</title>
        <authorList>
            <person name="Farooq S."/>
            <person name="Qayum A."/>
            <person name="Nalli Y."/>
            <person name="Lauro G."/>
            <person name="Chini M.G."/>
            <person name="Bifulco G."/>
            <person name="Chaubey A."/>
            <person name="Singh S.K."/>
            <person name="Riyaz-Ul-Hassan S."/>
            <person name="Ali A."/>
        </authorList>
    </citation>
    <scope>BIOTECHNOLOGY</scope>
</reference>
<reference key="7">
    <citation type="journal article" date="2021" name="J. Nat. Prod.">
        <title>Heterologous biosynthesis of tetrahydroxanthone dimers: determination of key factors for selective or divergent synthesis.</title>
        <authorList>
            <person name="Wei X."/>
            <person name="Chen X."/>
            <person name="Chen L."/>
            <person name="Yan D."/>
            <person name="Wang W.G."/>
            <person name="Matsuda Y."/>
        </authorList>
    </citation>
    <scope>FUNCTION</scope>
    <scope>CATALYTIC ACTIVITY</scope>
    <scope>PATHWAY</scope>
</reference>
<comment type="function">
    <text evidence="7 9 13">Cytochrome P450 monooxygenase; part of the gene cluster that mediates the biosynthesis of the tetrahydroxanthone dimer secalonic acid D (PubMed:30996871, PubMed:33891392). The pathway begins with the synthesis of atrochrysone thioester by the polyketide synthase AacuL (Probable). The atrochrysone carboxyl ACP thioesterase AacuM then breaks the thioester bond and releases the atrochrysone carboxylic acid from AacuL (Probable). Atrochrysone carboxylic acid is decarboxylated by the decarboxylase AacuI, and oxidized by the anthrone oxygenase AacuG to yield emodin (Probable). Emodin is then reduced to emodin hydroquinone by a yet unidentified oxidoreductase (Probable). A-ring reduction by the short chain dehydrogenase AacuN, dehydration by the scytalone dehydratase-like protein AacuK and probable spontaneous re-oxidation, results in overall deoxygenation to chrysophanol (PubMed:33891392). Baeyer-Villiger oxidation by the Baeyer-Villiger monooxygenase (BVMO) AacuH then yields monodictyphenone (PubMed:33891392). Monodictyphenone is transformed into compounds with the tetrahydroxanthone skeleton via methylesterification by the methyltransferase AacuQ, followed by the action of the flavin-dependent monooxygenase AacuC, the isomerase AacuP, and the short chain dehydrogenase/reductase AacuF or AacuD (PubMed:33891392). AacuF and AacuD should accept the same compound as a substrate but perform the ketoreduction with a different stereoselectivity, thus yielding blennolides B and A, respectively (PubMed:33891392). In the final step of the biosynthesis, the cytochrome P450 monooxygenase AacuE accepts blennolide B and/or blennolide A to conduct the dimerization reaction to furnish the tetrahydroxanthone dimers, secalonic acids D, B, and F (PubMed:33891392).</text>
</comment>
<comment type="cofactor">
    <cofactor evidence="1">
        <name>heme</name>
        <dbReference type="ChEBI" id="CHEBI:30413"/>
    </cofactor>
</comment>
<comment type="pathway">
    <text evidence="12">Secondary metabolite biosynthesis.</text>
</comment>
<comment type="subcellular location">
    <subcellularLocation>
        <location evidence="2">Membrane</location>
        <topology evidence="2">Single-pass membrane protein</topology>
    </subcellularLocation>
</comment>
<comment type="biotechnology">
    <text evidence="4 5 6 8">Secalonic acids show unprecedented anticancer activities against various human cancer cells and might be interesting for further derivatization, targeting diseases such as cancer.</text>
</comment>
<comment type="similarity">
    <text evidence="11">Belongs to the cytochrome P450 family.</text>
</comment>
<name>AACUE_ASPA1</name>
<organism>
    <name type="scientific">Aspergillus aculeatus (strain ATCC 16872 / CBS 172.66 / WB 5094)</name>
    <dbReference type="NCBI Taxonomy" id="690307"/>
    <lineage>
        <taxon>Eukaryota</taxon>
        <taxon>Fungi</taxon>
        <taxon>Dikarya</taxon>
        <taxon>Ascomycota</taxon>
        <taxon>Pezizomycotina</taxon>
        <taxon>Eurotiomycetes</taxon>
        <taxon>Eurotiomycetidae</taxon>
        <taxon>Eurotiales</taxon>
        <taxon>Aspergillaceae</taxon>
        <taxon>Aspergillus</taxon>
        <taxon>Aspergillus subgen. Circumdati</taxon>
    </lineage>
</organism>
<dbReference type="EC" id="1.14.13.-" evidence="12"/>
<dbReference type="EMBL" id="KV878984">
    <property type="protein sequence ID" value="OJJ96979.1"/>
    <property type="molecule type" value="Genomic_DNA"/>
</dbReference>
<dbReference type="RefSeq" id="XP_020053319.1">
    <property type="nucleotide sequence ID" value="XM_020199974.1"/>
</dbReference>
<dbReference type="SMR" id="A0A1L9WLE2"/>
<dbReference type="STRING" id="690307.A0A1L9WLE2"/>
<dbReference type="GlyCosmos" id="A0A1L9WLE2">
    <property type="glycosylation" value="1 site, No reported glycans"/>
</dbReference>
<dbReference type="GeneID" id="30973788"/>
<dbReference type="VEuPathDB" id="FungiDB:ASPACDRAFT_33648"/>
<dbReference type="OMA" id="ANAGYLC"/>
<dbReference type="OrthoDB" id="1055148at2759"/>
<dbReference type="Proteomes" id="UP000184546">
    <property type="component" value="Unassembled WGS sequence"/>
</dbReference>
<dbReference type="GO" id="GO:0016020">
    <property type="term" value="C:membrane"/>
    <property type="evidence" value="ECO:0007669"/>
    <property type="project" value="UniProtKB-SubCell"/>
</dbReference>
<dbReference type="GO" id="GO:0020037">
    <property type="term" value="F:heme binding"/>
    <property type="evidence" value="ECO:0007669"/>
    <property type="project" value="InterPro"/>
</dbReference>
<dbReference type="GO" id="GO:0005506">
    <property type="term" value="F:iron ion binding"/>
    <property type="evidence" value="ECO:0007669"/>
    <property type="project" value="InterPro"/>
</dbReference>
<dbReference type="GO" id="GO:0004497">
    <property type="term" value="F:monooxygenase activity"/>
    <property type="evidence" value="ECO:0007669"/>
    <property type="project" value="UniProtKB-KW"/>
</dbReference>
<dbReference type="GO" id="GO:0016705">
    <property type="term" value="F:oxidoreductase activity, acting on paired donors, with incorporation or reduction of molecular oxygen"/>
    <property type="evidence" value="ECO:0007669"/>
    <property type="project" value="InterPro"/>
</dbReference>
<dbReference type="GO" id="GO:0019748">
    <property type="term" value="P:secondary metabolic process"/>
    <property type="evidence" value="ECO:0007669"/>
    <property type="project" value="UniProtKB-ARBA"/>
</dbReference>
<dbReference type="CDD" id="cd00302">
    <property type="entry name" value="cytochrome_P450"/>
    <property type="match status" value="1"/>
</dbReference>
<dbReference type="Gene3D" id="1.10.630.10">
    <property type="entry name" value="Cytochrome P450"/>
    <property type="match status" value="1"/>
</dbReference>
<dbReference type="InterPro" id="IPR001128">
    <property type="entry name" value="Cyt_P450"/>
</dbReference>
<dbReference type="InterPro" id="IPR002403">
    <property type="entry name" value="Cyt_P450_E_grp-IV"/>
</dbReference>
<dbReference type="InterPro" id="IPR036396">
    <property type="entry name" value="Cyt_P450_sf"/>
</dbReference>
<dbReference type="PANTHER" id="PTHR46206">
    <property type="entry name" value="CYTOCHROME P450"/>
    <property type="match status" value="1"/>
</dbReference>
<dbReference type="PANTHER" id="PTHR46206:SF5">
    <property type="entry name" value="P450, PUTATIVE (EUROFUNG)-RELATED"/>
    <property type="match status" value="1"/>
</dbReference>
<dbReference type="Pfam" id="PF00067">
    <property type="entry name" value="p450"/>
    <property type="match status" value="1"/>
</dbReference>
<dbReference type="PRINTS" id="PR00465">
    <property type="entry name" value="EP450IV"/>
</dbReference>
<dbReference type="SUPFAM" id="SSF48264">
    <property type="entry name" value="Cytochrome P450"/>
    <property type="match status" value="1"/>
</dbReference>
<sequence length="502" mass="56599">MKAAITGLVATVTTFLAYIVFLSYTPRVDKKSPQFTPNTVPLVGSWSFFTQKWAFWQDCVAKSQTGHFSFWLGKYHVVGVSGAAARKVFLDNPNFDFVRGATLVGHGPDFVPPLHAIFHGNFQNGRSYFQRRLVDLQKSEQLGKRLPGVTRDARGAFEALRQHASGVMNPTDACYRLVVQQACRVVCSDEIADDPAVLARTQSVLSLLMHTSSIHAVALPYLPSLAKLKRRWGRYGLSRIVTPIVQRRLQKKKDAPRHDDVVQYMLDRGDSPEWMVAFFISTLFIASANAGYLSGAMLNILAYHPDWQARIYREIKTVAAAHAPNPHAPLVDQLDTIPLDAWESFFPSIDLCFKEAIRMWVAFPMIRLNMAPHAVPIPGTDEVVPAGTFASYNSTEVHFNPELYPDPYRYDPERFREGREEFKKEVYGFVGWGQGRHPCLGMRWAKIQLNIILAYALAMYEWSGCDEKGQPSTHFDRKTDLNAPGPSLPVGLFCKYVPRKEV</sequence>
<feature type="chain" id="PRO_0000453474" description="Cytochrome P450 monooxygenase AacuE">
    <location>
        <begin position="1"/>
        <end position="502"/>
    </location>
</feature>
<feature type="transmembrane region" description="Helical" evidence="2">
    <location>
        <begin position="4"/>
        <end position="26"/>
    </location>
</feature>
<feature type="binding site" description="axial binding residue" evidence="1">
    <location>
        <position position="439"/>
    </location>
    <ligand>
        <name>heme</name>
        <dbReference type="ChEBI" id="CHEBI:30413"/>
    </ligand>
    <ligandPart>
        <name>Fe</name>
        <dbReference type="ChEBI" id="CHEBI:18248"/>
    </ligandPart>
</feature>
<feature type="glycosylation site" description="N-linked (GlcNAc...) asparagine" evidence="3">
    <location>
        <position position="393"/>
    </location>
</feature>
<keyword id="KW-0325">Glycoprotein</keyword>
<keyword id="KW-0349">Heme</keyword>
<keyword id="KW-0408">Iron</keyword>
<keyword id="KW-0472">Membrane</keyword>
<keyword id="KW-0479">Metal-binding</keyword>
<keyword id="KW-0503">Monooxygenase</keyword>
<keyword id="KW-0560">Oxidoreductase</keyword>
<keyword id="KW-1185">Reference proteome</keyword>
<keyword id="KW-0812">Transmembrane</keyword>
<keyword id="KW-1133">Transmembrane helix</keyword>